<accession>A2S6U9</accession>
<proteinExistence type="inferred from homology"/>
<protein>
    <recommendedName>
        <fullName evidence="1">Probable chemoreceptor glutamine deamidase CheD</fullName>
        <ecNumber evidence="1">3.5.1.44</ecNumber>
    </recommendedName>
</protein>
<feature type="chain" id="PRO_1000068545" description="Probable chemoreceptor glutamine deamidase CheD">
    <location>
        <begin position="1"/>
        <end position="234"/>
    </location>
</feature>
<reference key="1">
    <citation type="journal article" date="2010" name="Genome Biol. Evol.">
        <title>Continuing evolution of Burkholderia mallei through genome reduction and large-scale rearrangements.</title>
        <authorList>
            <person name="Losada L."/>
            <person name="Ronning C.M."/>
            <person name="DeShazer D."/>
            <person name="Woods D."/>
            <person name="Fedorova N."/>
            <person name="Kim H.S."/>
            <person name="Shabalina S.A."/>
            <person name="Pearson T.R."/>
            <person name="Brinkac L."/>
            <person name="Tan P."/>
            <person name="Nandi T."/>
            <person name="Crabtree J."/>
            <person name="Badger J."/>
            <person name="Beckstrom-Sternberg S."/>
            <person name="Saqib M."/>
            <person name="Schutzer S.E."/>
            <person name="Keim P."/>
            <person name="Nierman W.C."/>
        </authorList>
    </citation>
    <scope>NUCLEOTIDE SEQUENCE [LARGE SCALE GENOMIC DNA]</scope>
    <source>
        <strain>NCTC 10229</strain>
    </source>
</reference>
<name>CHED_BURM9</name>
<dbReference type="EC" id="3.5.1.44" evidence="1"/>
<dbReference type="EMBL" id="CP000546">
    <property type="protein sequence ID" value="ABN01443.1"/>
    <property type="molecule type" value="Genomic_DNA"/>
</dbReference>
<dbReference type="RefSeq" id="WP_004198646.1">
    <property type="nucleotide sequence ID" value="NC_008836.1"/>
</dbReference>
<dbReference type="SMR" id="A2S6U9"/>
<dbReference type="GeneID" id="92980525"/>
<dbReference type="KEGG" id="bml:BMA10229_A1688"/>
<dbReference type="HOGENOM" id="CLU_087854_0_0_4"/>
<dbReference type="Proteomes" id="UP000002283">
    <property type="component" value="Chromosome I"/>
</dbReference>
<dbReference type="GO" id="GO:0050568">
    <property type="term" value="F:protein-glutamine glutaminase activity"/>
    <property type="evidence" value="ECO:0007669"/>
    <property type="project" value="UniProtKB-UniRule"/>
</dbReference>
<dbReference type="GO" id="GO:0006935">
    <property type="term" value="P:chemotaxis"/>
    <property type="evidence" value="ECO:0007669"/>
    <property type="project" value="UniProtKB-UniRule"/>
</dbReference>
<dbReference type="CDD" id="cd16352">
    <property type="entry name" value="CheD"/>
    <property type="match status" value="1"/>
</dbReference>
<dbReference type="Gene3D" id="3.30.1330.200">
    <property type="match status" value="1"/>
</dbReference>
<dbReference type="HAMAP" id="MF_01440">
    <property type="entry name" value="CheD"/>
    <property type="match status" value="1"/>
</dbReference>
<dbReference type="InterPro" id="IPR038592">
    <property type="entry name" value="CheD-like_sf"/>
</dbReference>
<dbReference type="InterPro" id="IPR005659">
    <property type="entry name" value="Chemorcpt_Glu_NH3ase_CheD"/>
</dbReference>
<dbReference type="InterPro" id="IPR011324">
    <property type="entry name" value="Cytotoxic_necrot_fac-like_cat"/>
</dbReference>
<dbReference type="NCBIfam" id="NF010013">
    <property type="entry name" value="PRK13487.1"/>
    <property type="match status" value="1"/>
</dbReference>
<dbReference type="NCBIfam" id="NF010014">
    <property type="entry name" value="PRK13489.1"/>
    <property type="match status" value="1"/>
</dbReference>
<dbReference type="PANTHER" id="PTHR35147">
    <property type="entry name" value="CHEMORECEPTOR GLUTAMINE DEAMIDASE CHED-RELATED"/>
    <property type="match status" value="1"/>
</dbReference>
<dbReference type="PANTHER" id="PTHR35147:SF2">
    <property type="entry name" value="CHEMORECEPTOR GLUTAMINE DEAMIDASE CHED-RELATED"/>
    <property type="match status" value="1"/>
</dbReference>
<dbReference type="Pfam" id="PF03975">
    <property type="entry name" value="CheD"/>
    <property type="match status" value="1"/>
</dbReference>
<dbReference type="SUPFAM" id="SSF64438">
    <property type="entry name" value="CNF1/YfiH-like putative cysteine hydrolases"/>
    <property type="match status" value="1"/>
</dbReference>
<sequence length="234" mass="25682">MSGLPIATNLYFDAHFHRHGVKLLPNEFYTTREDMVLVTVLGSCVAACLHDPIGRIGGMNHFMLPDDGADPSAAASESMRYGAYAMEVLINELIKAGGRRERFEAKVFGGAAVLAGMTTINIGDRNADFVRRYLALERIRITAEDLQGVHPRKVAFMPHTGQAMVKKLRVQAPDVAAREAALAREAVDPHGERAPRVRPRVELFGTPAPKAQAKPRIELFGMRATQPATRKQEA</sequence>
<evidence type="ECO:0000255" key="1">
    <source>
        <dbReference type="HAMAP-Rule" id="MF_01440"/>
    </source>
</evidence>
<organism>
    <name type="scientific">Burkholderia mallei (strain NCTC 10229)</name>
    <dbReference type="NCBI Taxonomy" id="412022"/>
    <lineage>
        <taxon>Bacteria</taxon>
        <taxon>Pseudomonadati</taxon>
        <taxon>Pseudomonadota</taxon>
        <taxon>Betaproteobacteria</taxon>
        <taxon>Burkholderiales</taxon>
        <taxon>Burkholderiaceae</taxon>
        <taxon>Burkholderia</taxon>
        <taxon>pseudomallei group</taxon>
    </lineage>
</organism>
<keyword id="KW-0145">Chemotaxis</keyword>
<keyword id="KW-0378">Hydrolase</keyword>
<gene>
    <name evidence="1" type="primary">cheD</name>
    <name type="ordered locus">BMA10229_A1688</name>
</gene>
<comment type="function">
    <text evidence="1">Probably deamidates glutamine residues to glutamate on methyl-accepting chemotaxis receptors (MCPs), playing an important role in chemotaxis.</text>
</comment>
<comment type="catalytic activity">
    <reaction evidence="1">
        <text>L-glutaminyl-[protein] + H2O = L-glutamyl-[protein] + NH4(+)</text>
        <dbReference type="Rhea" id="RHEA:16441"/>
        <dbReference type="Rhea" id="RHEA-COMP:10207"/>
        <dbReference type="Rhea" id="RHEA-COMP:10208"/>
        <dbReference type="ChEBI" id="CHEBI:15377"/>
        <dbReference type="ChEBI" id="CHEBI:28938"/>
        <dbReference type="ChEBI" id="CHEBI:29973"/>
        <dbReference type="ChEBI" id="CHEBI:30011"/>
        <dbReference type="EC" id="3.5.1.44"/>
    </reaction>
</comment>
<comment type="similarity">
    <text evidence="1">Belongs to the CheD family.</text>
</comment>